<name>UNG_PASMU</name>
<comment type="function">
    <text evidence="1">Excises uracil residues from the DNA which can arise as a result of misincorporation of dUMP residues by DNA polymerase or due to deamination of cytosine.</text>
</comment>
<comment type="catalytic activity">
    <reaction>
        <text>Hydrolyzes single-stranded DNA or mismatched double-stranded DNA and polynucleotides, releasing free uracil.</text>
        <dbReference type="EC" id="3.2.2.27"/>
    </reaction>
</comment>
<comment type="subcellular location">
    <subcellularLocation>
        <location evidence="1">Cytoplasm</location>
    </subcellularLocation>
</comment>
<comment type="similarity">
    <text evidence="2">Belongs to the uracil-DNA glycosylase (UDG) superfamily. UNG family.</text>
</comment>
<sequence length="222" mass="24906">MKTWKDVIGTEKTQPYFKHILDQVHQARASGKIVYPPPQEVFSAFQLTEFEAVKVVIIGQDPYHGPNQAHGLAFSVKPGVVPPPSLMNMYKELTQDIEGFQIPNHGYLVPWAEQGVLLLNTVLTVEQGKAHSHASFGWETFTDRVIAALNAQREKLVFLLWGSHAQKKGQFIDRQKHCVFTAPHPSPLSAHRGFLGCRHFSKTNAYLMAQGLSPIQWQLASL</sequence>
<dbReference type="EC" id="3.2.2.27"/>
<dbReference type="EMBL" id="AE004439">
    <property type="protein sequence ID" value="AAK02149.1"/>
    <property type="molecule type" value="Genomic_DNA"/>
</dbReference>
<dbReference type="RefSeq" id="WP_005718925.1">
    <property type="nucleotide sequence ID" value="NC_002663.1"/>
</dbReference>
<dbReference type="SMR" id="P57807"/>
<dbReference type="STRING" id="272843.PM0065"/>
<dbReference type="EnsemblBacteria" id="AAK02149">
    <property type="protein sequence ID" value="AAK02149"/>
    <property type="gene ID" value="PM0065"/>
</dbReference>
<dbReference type="GeneID" id="77207404"/>
<dbReference type="KEGG" id="pmu:PM0065"/>
<dbReference type="HOGENOM" id="CLU_032162_3_1_6"/>
<dbReference type="OrthoDB" id="9804372at2"/>
<dbReference type="Proteomes" id="UP000000809">
    <property type="component" value="Chromosome"/>
</dbReference>
<dbReference type="GO" id="GO:0005737">
    <property type="term" value="C:cytoplasm"/>
    <property type="evidence" value="ECO:0007669"/>
    <property type="project" value="UniProtKB-SubCell"/>
</dbReference>
<dbReference type="GO" id="GO:0004844">
    <property type="term" value="F:uracil DNA N-glycosylase activity"/>
    <property type="evidence" value="ECO:0007669"/>
    <property type="project" value="UniProtKB-UniRule"/>
</dbReference>
<dbReference type="GO" id="GO:0097510">
    <property type="term" value="P:base-excision repair, AP site formation via deaminated base removal"/>
    <property type="evidence" value="ECO:0007669"/>
    <property type="project" value="TreeGrafter"/>
</dbReference>
<dbReference type="CDD" id="cd10027">
    <property type="entry name" value="UDG-F1-like"/>
    <property type="match status" value="1"/>
</dbReference>
<dbReference type="FunFam" id="3.40.470.10:FF:000001">
    <property type="entry name" value="Uracil-DNA glycosylase"/>
    <property type="match status" value="1"/>
</dbReference>
<dbReference type="Gene3D" id="3.40.470.10">
    <property type="entry name" value="Uracil-DNA glycosylase-like domain"/>
    <property type="match status" value="1"/>
</dbReference>
<dbReference type="HAMAP" id="MF_00148">
    <property type="entry name" value="UDG"/>
    <property type="match status" value="1"/>
</dbReference>
<dbReference type="InterPro" id="IPR002043">
    <property type="entry name" value="UDG_fam1"/>
</dbReference>
<dbReference type="InterPro" id="IPR018085">
    <property type="entry name" value="Ura-DNA_Glyclase_AS"/>
</dbReference>
<dbReference type="InterPro" id="IPR005122">
    <property type="entry name" value="Uracil-DNA_glycosylase-like"/>
</dbReference>
<dbReference type="InterPro" id="IPR036895">
    <property type="entry name" value="Uracil-DNA_glycosylase-like_sf"/>
</dbReference>
<dbReference type="NCBIfam" id="NF003588">
    <property type="entry name" value="PRK05254.1-1"/>
    <property type="match status" value="1"/>
</dbReference>
<dbReference type="NCBIfam" id="NF003589">
    <property type="entry name" value="PRK05254.1-2"/>
    <property type="match status" value="1"/>
</dbReference>
<dbReference type="NCBIfam" id="NF003591">
    <property type="entry name" value="PRK05254.1-4"/>
    <property type="match status" value="1"/>
</dbReference>
<dbReference type="NCBIfam" id="NF003592">
    <property type="entry name" value="PRK05254.1-5"/>
    <property type="match status" value="1"/>
</dbReference>
<dbReference type="NCBIfam" id="TIGR00628">
    <property type="entry name" value="ung"/>
    <property type="match status" value="1"/>
</dbReference>
<dbReference type="PANTHER" id="PTHR11264">
    <property type="entry name" value="URACIL-DNA GLYCOSYLASE"/>
    <property type="match status" value="1"/>
</dbReference>
<dbReference type="PANTHER" id="PTHR11264:SF0">
    <property type="entry name" value="URACIL-DNA GLYCOSYLASE"/>
    <property type="match status" value="1"/>
</dbReference>
<dbReference type="Pfam" id="PF03167">
    <property type="entry name" value="UDG"/>
    <property type="match status" value="1"/>
</dbReference>
<dbReference type="SMART" id="SM00986">
    <property type="entry name" value="UDG"/>
    <property type="match status" value="1"/>
</dbReference>
<dbReference type="SMART" id="SM00987">
    <property type="entry name" value="UreE_C"/>
    <property type="match status" value="1"/>
</dbReference>
<dbReference type="SUPFAM" id="SSF52141">
    <property type="entry name" value="Uracil-DNA glycosylase-like"/>
    <property type="match status" value="1"/>
</dbReference>
<dbReference type="PROSITE" id="PS00130">
    <property type="entry name" value="U_DNA_GLYCOSYLASE"/>
    <property type="match status" value="1"/>
</dbReference>
<gene>
    <name type="primary">ung</name>
    <name type="ordered locus">PM0065</name>
</gene>
<protein>
    <recommendedName>
        <fullName>Uracil-DNA glycosylase</fullName>
        <shortName>UDG</shortName>
        <ecNumber>3.2.2.27</ecNumber>
    </recommendedName>
</protein>
<proteinExistence type="inferred from homology"/>
<evidence type="ECO:0000250" key="1"/>
<evidence type="ECO:0000305" key="2"/>
<feature type="chain" id="PRO_0000176124" description="Uracil-DNA glycosylase">
    <location>
        <begin position="1"/>
        <end position="222"/>
    </location>
</feature>
<feature type="active site" description="Proton acceptor" evidence="1">
    <location>
        <position position="61"/>
    </location>
</feature>
<reference key="1">
    <citation type="journal article" date="2001" name="Proc. Natl. Acad. Sci. U.S.A.">
        <title>Complete genomic sequence of Pasteurella multocida Pm70.</title>
        <authorList>
            <person name="May B.J."/>
            <person name="Zhang Q."/>
            <person name="Li L.L."/>
            <person name="Paustian M.L."/>
            <person name="Whittam T.S."/>
            <person name="Kapur V."/>
        </authorList>
    </citation>
    <scope>NUCLEOTIDE SEQUENCE [LARGE SCALE GENOMIC DNA]</scope>
    <source>
        <strain>Pm70</strain>
    </source>
</reference>
<organism>
    <name type="scientific">Pasteurella multocida (strain Pm70)</name>
    <dbReference type="NCBI Taxonomy" id="272843"/>
    <lineage>
        <taxon>Bacteria</taxon>
        <taxon>Pseudomonadati</taxon>
        <taxon>Pseudomonadota</taxon>
        <taxon>Gammaproteobacteria</taxon>
        <taxon>Pasteurellales</taxon>
        <taxon>Pasteurellaceae</taxon>
        <taxon>Pasteurella</taxon>
    </lineage>
</organism>
<accession>P57807</accession>
<keyword id="KW-0963">Cytoplasm</keyword>
<keyword id="KW-0227">DNA damage</keyword>
<keyword id="KW-0234">DNA repair</keyword>
<keyword id="KW-0378">Hydrolase</keyword>
<keyword id="KW-1185">Reference proteome</keyword>